<sequence>MMEDTIAAISTPLGEGGIGIVRVSGPGAIEAVKNVFIPRQSKDLSKVPSFTLHYGKIVDPADGKIVDEVLVSVMRAPKSYTGEDVVEINCHGGIVAVEKVLELILKQGIRLAEPGEFTKRAFLNGRIDLSQAEAVIDIIRAKTEASLKLAGRQLSGELREKINAVRQKIINILAFIEVSIDYPEYEFDEVTPETALKNIDEIINDVRRLLSSYERGRILREGITAVIAGKPNVGKSSLLNALLRKKRAIVTDIPGTTRDVIEDYLNLKGIPVKIVDTAGIRETEDLVEKLGVEKTREYLNQADVTLFVVDVSIGIDEDDEKILSLINKDKSLLVINKIDLLQGKVNFEQYAVKTGIKNFVPFSARNFEGLEILENKLYEILIPEQEGEGESALISNLRHKNYLEKALNSLLSAKESIASGEPVDLVAIDLNEALRELGAITGDALGDEIINEIFSQFCVGK</sequence>
<accession>Q3AG56</accession>
<name>MNME_CARHZ</name>
<evidence type="ECO:0000255" key="1">
    <source>
        <dbReference type="HAMAP-Rule" id="MF_00379"/>
    </source>
</evidence>
<gene>
    <name evidence="1" type="primary">mnmE</name>
    <name evidence="1" type="synonym">trmE</name>
    <name type="ordered locus">CHY_0006</name>
</gene>
<protein>
    <recommendedName>
        <fullName evidence="1">tRNA modification GTPase MnmE</fullName>
        <ecNumber evidence="1">3.6.-.-</ecNumber>
    </recommendedName>
</protein>
<dbReference type="EC" id="3.6.-.-" evidence="1"/>
<dbReference type="EMBL" id="CP000141">
    <property type="protein sequence ID" value="ABB15607.1"/>
    <property type="molecule type" value="Genomic_DNA"/>
</dbReference>
<dbReference type="RefSeq" id="WP_011342954.1">
    <property type="nucleotide sequence ID" value="NC_007503.1"/>
</dbReference>
<dbReference type="SMR" id="Q3AG56"/>
<dbReference type="FunCoup" id="Q3AG56">
    <property type="interactions" value="416"/>
</dbReference>
<dbReference type="STRING" id="246194.CHY_0006"/>
<dbReference type="KEGG" id="chy:CHY_0006"/>
<dbReference type="eggNOG" id="COG0486">
    <property type="taxonomic scope" value="Bacteria"/>
</dbReference>
<dbReference type="HOGENOM" id="CLU_019624_4_1_9"/>
<dbReference type="InParanoid" id="Q3AG56"/>
<dbReference type="OrthoDB" id="9805918at2"/>
<dbReference type="Proteomes" id="UP000002706">
    <property type="component" value="Chromosome"/>
</dbReference>
<dbReference type="GO" id="GO:0005829">
    <property type="term" value="C:cytosol"/>
    <property type="evidence" value="ECO:0007669"/>
    <property type="project" value="TreeGrafter"/>
</dbReference>
<dbReference type="GO" id="GO:0005525">
    <property type="term" value="F:GTP binding"/>
    <property type="evidence" value="ECO:0007669"/>
    <property type="project" value="UniProtKB-UniRule"/>
</dbReference>
<dbReference type="GO" id="GO:0003924">
    <property type="term" value="F:GTPase activity"/>
    <property type="evidence" value="ECO:0007669"/>
    <property type="project" value="UniProtKB-UniRule"/>
</dbReference>
<dbReference type="GO" id="GO:0046872">
    <property type="term" value="F:metal ion binding"/>
    <property type="evidence" value="ECO:0007669"/>
    <property type="project" value="UniProtKB-KW"/>
</dbReference>
<dbReference type="GO" id="GO:0030488">
    <property type="term" value="P:tRNA methylation"/>
    <property type="evidence" value="ECO:0007669"/>
    <property type="project" value="TreeGrafter"/>
</dbReference>
<dbReference type="GO" id="GO:0002098">
    <property type="term" value="P:tRNA wobble uridine modification"/>
    <property type="evidence" value="ECO:0007669"/>
    <property type="project" value="TreeGrafter"/>
</dbReference>
<dbReference type="CDD" id="cd04164">
    <property type="entry name" value="trmE"/>
    <property type="match status" value="1"/>
</dbReference>
<dbReference type="CDD" id="cd14858">
    <property type="entry name" value="TrmE_N"/>
    <property type="match status" value="1"/>
</dbReference>
<dbReference type="FunFam" id="3.30.1360.120:FF:000003">
    <property type="entry name" value="tRNA modification GTPase MnmE"/>
    <property type="match status" value="1"/>
</dbReference>
<dbReference type="FunFam" id="3.40.50.300:FF:000494">
    <property type="entry name" value="tRNA modification GTPase MnmE"/>
    <property type="match status" value="1"/>
</dbReference>
<dbReference type="Gene3D" id="3.40.50.300">
    <property type="entry name" value="P-loop containing nucleotide triphosphate hydrolases"/>
    <property type="match status" value="1"/>
</dbReference>
<dbReference type="Gene3D" id="3.30.1360.120">
    <property type="entry name" value="Probable tRNA modification gtpase trme, domain 1"/>
    <property type="match status" value="1"/>
</dbReference>
<dbReference type="Gene3D" id="1.20.120.430">
    <property type="entry name" value="tRNA modification GTPase MnmE domain 2"/>
    <property type="match status" value="1"/>
</dbReference>
<dbReference type="HAMAP" id="MF_00379">
    <property type="entry name" value="GTPase_MnmE"/>
    <property type="match status" value="1"/>
</dbReference>
<dbReference type="InterPro" id="IPR031168">
    <property type="entry name" value="G_TrmE"/>
</dbReference>
<dbReference type="InterPro" id="IPR006073">
    <property type="entry name" value="GTP-bd"/>
</dbReference>
<dbReference type="InterPro" id="IPR018948">
    <property type="entry name" value="GTP-bd_TrmE_N"/>
</dbReference>
<dbReference type="InterPro" id="IPR004520">
    <property type="entry name" value="GTPase_MnmE"/>
</dbReference>
<dbReference type="InterPro" id="IPR027368">
    <property type="entry name" value="MnmE_dom2"/>
</dbReference>
<dbReference type="InterPro" id="IPR025867">
    <property type="entry name" value="MnmE_helical"/>
</dbReference>
<dbReference type="InterPro" id="IPR027417">
    <property type="entry name" value="P-loop_NTPase"/>
</dbReference>
<dbReference type="InterPro" id="IPR005225">
    <property type="entry name" value="Small_GTP-bd"/>
</dbReference>
<dbReference type="InterPro" id="IPR027266">
    <property type="entry name" value="TrmE/GcvT_dom1"/>
</dbReference>
<dbReference type="NCBIfam" id="TIGR00450">
    <property type="entry name" value="mnmE_trmE_thdF"/>
    <property type="match status" value="1"/>
</dbReference>
<dbReference type="NCBIfam" id="NF003661">
    <property type="entry name" value="PRK05291.1-3"/>
    <property type="match status" value="1"/>
</dbReference>
<dbReference type="NCBIfam" id="TIGR00231">
    <property type="entry name" value="small_GTP"/>
    <property type="match status" value="1"/>
</dbReference>
<dbReference type="PANTHER" id="PTHR42714">
    <property type="entry name" value="TRNA MODIFICATION GTPASE GTPBP3"/>
    <property type="match status" value="1"/>
</dbReference>
<dbReference type="PANTHER" id="PTHR42714:SF2">
    <property type="entry name" value="TRNA MODIFICATION GTPASE GTPBP3, MITOCHONDRIAL"/>
    <property type="match status" value="1"/>
</dbReference>
<dbReference type="Pfam" id="PF01926">
    <property type="entry name" value="MMR_HSR1"/>
    <property type="match status" value="1"/>
</dbReference>
<dbReference type="Pfam" id="PF12631">
    <property type="entry name" value="MnmE_helical"/>
    <property type="match status" value="1"/>
</dbReference>
<dbReference type="Pfam" id="PF10396">
    <property type="entry name" value="TrmE_N"/>
    <property type="match status" value="1"/>
</dbReference>
<dbReference type="SUPFAM" id="SSF52540">
    <property type="entry name" value="P-loop containing nucleoside triphosphate hydrolases"/>
    <property type="match status" value="1"/>
</dbReference>
<dbReference type="SUPFAM" id="SSF116878">
    <property type="entry name" value="TrmE connector domain"/>
    <property type="match status" value="1"/>
</dbReference>
<dbReference type="PROSITE" id="PS51709">
    <property type="entry name" value="G_TRME"/>
    <property type="match status" value="1"/>
</dbReference>
<keyword id="KW-0963">Cytoplasm</keyword>
<keyword id="KW-0342">GTP-binding</keyword>
<keyword id="KW-0378">Hydrolase</keyword>
<keyword id="KW-0460">Magnesium</keyword>
<keyword id="KW-0479">Metal-binding</keyword>
<keyword id="KW-0547">Nucleotide-binding</keyword>
<keyword id="KW-0630">Potassium</keyword>
<keyword id="KW-1185">Reference proteome</keyword>
<keyword id="KW-0819">tRNA processing</keyword>
<comment type="function">
    <text evidence="1">Exhibits a very high intrinsic GTPase hydrolysis rate. Involved in the addition of a carboxymethylaminomethyl (cmnm) group at the wobble position (U34) of certain tRNAs, forming tRNA-cmnm(5)s(2)U34.</text>
</comment>
<comment type="cofactor">
    <cofactor evidence="1">
        <name>K(+)</name>
        <dbReference type="ChEBI" id="CHEBI:29103"/>
    </cofactor>
    <text evidence="1">Binds 1 potassium ion per subunit.</text>
</comment>
<comment type="subunit">
    <text evidence="1">Homodimer. Heterotetramer of two MnmE and two MnmG subunits.</text>
</comment>
<comment type="subcellular location">
    <subcellularLocation>
        <location evidence="1">Cytoplasm</location>
    </subcellularLocation>
</comment>
<comment type="similarity">
    <text evidence="1">Belongs to the TRAFAC class TrmE-Era-EngA-EngB-Septin-like GTPase superfamily. TrmE GTPase family.</text>
</comment>
<organism>
    <name type="scientific">Carboxydothermus hydrogenoformans (strain ATCC BAA-161 / DSM 6008 / Z-2901)</name>
    <dbReference type="NCBI Taxonomy" id="246194"/>
    <lineage>
        <taxon>Bacteria</taxon>
        <taxon>Bacillati</taxon>
        <taxon>Bacillota</taxon>
        <taxon>Clostridia</taxon>
        <taxon>Thermoanaerobacterales</taxon>
        <taxon>Thermoanaerobacteraceae</taxon>
        <taxon>Carboxydothermus</taxon>
    </lineage>
</organism>
<feature type="chain" id="PRO_1000048812" description="tRNA modification GTPase MnmE">
    <location>
        <begin position="1"/>
        <end position="461"/>
    </location>
</feature>
<feature type="domain" description="TrmE-type G">
    <location>
        <begin position="222"/>
        <end position="382"/>
    </location>
</feature>
<feature type="binding site" evidence="1">
    <location>
        <position position="22"/>
    </location>
    <ligand>
        <name>(6S)-5-formyl-5,6,7,8-tetrahydrofolate</name>
        <dbReference type="ChEBI" id="CHEBI:57457"/>
    </ligand>
</feature>
<feature type="binding site" evidence="1">
    <location>
        <position position="87"/>
    </location>
    <ligand>
        <name>(6S)-5-formyl-5,6,7,8-tetrahydrofolate</name>
        <dbReference type="ChEBI" id="CHEBI:57457"/>
    </ligand>
</feature>
<feature type="binding site" evidence="1">
    <location>
        <position position="126"/>
    </location>
    <ligand>
        <name>(6S)-5-formyl-5,6,7,8-tetrahydrofolate</name>
        <dbReference type="ChEBI" id="CHEBI:57457"/>
    </ligand>
</feature>
<feature type="binding site" evidence="1">
    <location>
        <begin position="232"/>
        <end position="237"/>
    </location>
    <ligand>
        <name>GTP</name>
        <dbReference type="ChEBI" id="CHEBI:37565"/>
    </ligand>
</feature>
<feature type="binding site" evidence="1">
    <location>
        <position position="232"/>
    </location>
    <ligand>
        <name>K(+)</name>
        <dbReference type="ChEBI" id="CHEBI:29103"/>
    </ligand>
</feature>
<feature type="binding site" evidence="1">
    <location>
        <position position="236"/>
    </location>
    <ligand>
        <name>Mg(2+)</name>
        <dbReference type="ChEBI" id="CHEBI:18420"/>
    </ligand>
</feature>
<feature type="binding site" evidence="1">
    <location>
        <begin position="251"/>
        <end position="257"/>
    </location>
    <ligand>
        <name>GTP</name>
        <dbReference type="ChEBI" id="CHEBI:37565"/>
    </ligand>
</feature>
<feature type="binding site" evidence="1">
    <location>
        <position position="251"/>
    </location>
    <ligand>
        <name>K(+)</name>
        <dbReference type="ChEBI" id="CHEBI:29103"/>
    </ligand>
</feature>
<feature type="binding site" evidence="1">
    <location>
        <position position="253"/>
    </location>
    <ligand>
        <name>K(+)</name>
        <dbReference type="ChEBI" id="CHEBI:29103"/>
    </ligand>
</feature>
<feature type="binding site" evidence="1">
    <location>
        <position position="256"/>
    </location>
    <ligand>
        <name>K(+)</name>
        <dbReference type="ChEBI" id="CHEBI:29103"/>
    </ligand>
</feature>
<feature type="binding site" evidence="1">
    <location>
        <position position="257"/>
    </location>
    <ligand>
        <name>Mg(2+)</name>
        <dbReference type="ChEBI" id="CHEBI:18420"/>
    </ligand>
</feature>
<feature type="binding site" evidence="1">
    <location>
        <begin position="276"/>
        <end position="279"/>
    </location>
    <ligand>
        <name>GTP</name>
        <dbReference type="ChEBI" id="CHEBI:37565"/>
    </ligand>
</feature>
<feature type="binding site" evidence="1">
    <location>
        <begin position="363"/>
        <end position="365"/>
    </location>
    <ligand>
        <name>GTP</name>
        <dbReference type="ChEBI" id="CHEBI:37565"/>
    </ligand>
</feature>
<feature type="binding site" evidence="1">
    <location>
        <position position="461"/>
    </location>
    <ligand>
        <name>(6S)-5-formyl-5,6,7,8-tetrahydrofolate</name>
        <dbReference type="ChEBI" id="CHEBI:57457"/>
    </ligand>
</feature>
<proteinExistence type="inferred from homology"/>
<reference key="1">
    <citation type="journal article" date="2005" name="PLoS Genet.">
        <title>Life in hot carbon monoxide: the complete genome sequence of Carboxydothermus hydrogenoformans Z-2901.</title>
        <authorList>
            <person name="Wu M."/>
            <person name="Ren Q."/>
            <person name="Durkin A.S."/>
            <person name="Daugherty S.C."/>
            <person name="Brinkac L.M."/>
            <person name="Dodson R.J."/>
            <person name="Madupu R."/>
            <person name="Sullivan S.A."/>
            <person name="Kolonay J.F."/>
            <person name="Nelson W.C."/>
            <person name="Tallon L.J."/>
            <person name="Jones K.M."/>
            <person name="Ulrich L.E."/>
            <person name="Gonzalez J.M."/>
            <person name="Zhulin I.B."/>
            <person name="Robb F.T."/>
            <person name="Eisen J.A."/>
        </authorList>
    </citation>
    <scope>NUCLEOTIDE SEQUENCE [LARGE SCALE GENOMIC DNA]</scope>
    <source>
        <strain>ATCC BAA-161 / DSM 6008 / Z-2901</strain>
    </source>
</reference>